<reference key="1">
    <citation type="journal article" date="1995" name="Genomics">
        <title>Molecular cloning of a cDNA and chromosomal localization of a human theta-class glutathione S-transferase gene (GSTT2) to chromosome 22.</title>
        <authorList>
            <person name="Tan K.L."/>
            <person name="Webb G.C."/>
            <person name="Baker R.T."/>
            <person name="Board P.G."/>
        </authorList>
    </citation>
    <scope>NUCLEOTIDE SEQUENCE [MRNA]</scope>
    <source>
        <tissue>Liver</tissue>
    </source>
</reference>
<reference key="2">
    <citation type="submission" date="1998-04" db="EMBL/GenBank/DDBJ databases">
        <authorList>
            <person name="Coggan M.A."/>
            <person name="Board P.G."/>
        </authorList>
    </citation>
    <scope>NUCLEOTIDE SEQUENCE [GENOMIC DNA]</scope>
    <scope>VARIANT ILE-139</scope>
</reference>
<reference key="3">
    <citation type="journal article" date="2004" name="Genome Biol.">
        <title>A genome annotation-driven approach to cloning the human ORFeome.</title>
        <authorList>
            <person name="Collins J.E."/>
            <person name="Wright C.L."/>
            <person name="Edwards C.A."/>
            <person name="Davis M.P."/>
            <person name="Grinham J.A."/>
            <person name="Cole C.G."/>
            <person name="Goward M.E."/>
            <person name="Aguado B."/>
            <person name="Mallya M."/>
            <person name="Mokrab Y."/>
            <person name="Huckle E.J."/>
            <person name="Beare D.M."/>
            <person name="Dunham I."/>
        </authorList>
    </citation>
    <scope>NUCLEOTIDE SEQUENCE [LARGE SCALE MRNA]</scope>
</reference>
<reference key="4">
    <citation type="journal article" date="1999" name="Nature">
        <title>The DNA sequence of human chromosome 22.</title>
        <authorList>
            <person name="Dunham I."/>
            <person name="Hunt A.R."/>
            <person name="Collins J.E."/>
            <person name="Bruskiewich R."/>
            <person name="Beare D.M."/>
            <person name="Clamp M."/>
            <person name="Smink L.J."/>
            <person name="Ainscough R."/>
            <person name="Almeida J.P."/>
            <person name="Babbage A.K."/>
            <person name="Bagguley C."/>
            <person name="Bailey J."/>
            <person name="Barlow K.F."/>
            <person name="Bates K.N."/>
            <person name="Beasley O.P."/>
            <person name="Bird C.P."/>
            <person name="Blakey S.E."/>
            <person name="Bridgeman A.M."/>
            <person name="Buck D."/>
            <person name="Burgess J."/>
            <person name="Burrill W.D."/>
            <person name="Burton J."/>
            <person name="Carder C."/>
            <person name="Carter N.P."/>
            <person name="Chen Y."/>
            <person name="Clark G."/>
            <person name="Clegg S.M."/>
            <person name="Cobley V.E."/>
            <person name="Cole C.G."/>
            <person name="Collier R.E."/>
            <person name="Connor R."/>
            <person name="Conroy D."/>
            <person name="Corby N.R."/>
            <person name="Coville G.J."/>
            <person name="Cox A.V."/>
            <person name="Davis J."/>
            <person name="Dawson E."/>
            <person name="Dhami P.D."/>
            <person name="Dockree C."/>
            <person name="Dodsworth S.J."/>
            <person name="Durbin R.M."/>
            <person name="Ellington A.G."/>
            <person name="Evans K.L."/>
            <person name="Fey J.M."/>
            <person name="Fleming K."/>
            <person name="French L."/>
            <person name="Garner A.A."/>
            <person name="Gilbert J.G.R."/>
            <person name="Goward M.E."/>
            <person name="Grafham D.V."/>
            <person name="Griffiths M.N.D."/>
            <person name="Hall C."/>
            <person name="Hall R.E."/>
            <person name="Hall-Tamlyn G."/>
            <person name="Heathcott R.W."/>
            <person name="Ho S."/>
            <person name="Holmes S."/>
            <person name="Hunt S.E."/>
            <person name="Jones M.C."/>
            <person name="Kershaw J."/>
            <person name="Kimberley A.M."/>
            <person name="King A."/>
            <person name="Laird G.K."/>
            <person name="Langford C.F."/>
            <person name="Leversha M.A."/>
            <person name="Lloyd C."/>
            <person name="Lloyd D.M."/>
            <person name="Martyn I.D."/>
            <person name="Mashreghi-Mohammadi M."/>
            <person name="Matthews L.H."/>
            <person name="Mccann O.T."/>
            <person name="Mcclay J."/>
            <person name="Mclaren S."/>
            <person name="McMurray A.A."/>
            <person name="Milne S.A."/>
            <person name="Mortimore B.J."/>
            <person name="Odell C.N."/>
            <person name="Pavitt R."/>
            <person name="Pearce A.V."/>
            <person name="Pearson D."/>
            <person name="Phillimore B.J.C.T."/>
            <person name="Phillips S.H."/>
            <person name="Plumb R.W."/>
            <person name="Ramsay H."/>
            <person name="Ramsey Y."/>
            <person name="Rogers L."/>
            <person name="Ross M.T."/>
            <person name="Scott C.E."/>
            <person name="Sehra H.K."/>
            <person name="Skuce C.D."/>
            <person name="Smalley S."/>
            <person name="Smith M.L."/>
            <person name="Soderlund C."/>
            <person name="Spragon L."/>
            <person name="Steward C.A."/>
            <person name="Sulston J.E."/>
            <person name="Swann R.M."/>
            <person name="Vaudin M."/>
            <person name="Wall M."/>
            <person name="Wallis J.M."/>
            <person name="Whiteley M.N."/>
            <person name="Willey D.L."/>
            <person name="Williams L."/>
            <person name="Williams S.A."/>
            <person name="Williamson H."/>
            <person name="Wilmer T.E."/>
            <person name="Wilming L."/>
            <person name="Wright C.L."/>
            <person name="Hubbard T."/>
            <person name="Bentley D.R."/>
            <person name="Beck S."/>
            <person name="Rogers J."/>
            <person name="Shimizu N."/>
            <person name="Minoshima S."/>
            <person name="Kawasaki K."/>
            <person name="Sasaki T."/>
            <person name="Asakawa S."/>
            <person name="Kudoh J."/>
            <person name="Shintani A."/>
            <person name="Shibuya K."/>
            <person name="Yoshizaki Y."/>
            <person name="Aoki N."/>
            <person name="Mitsuyama S."/>
            <person name="Roe B.A."/>
            <person name="Chen F."/>
            <person name="Chu L."/>
            <person name="Crabtree J."/>
            <person name="Deschamps S."/>
            <person name="Do A."/>
            <person name="Do T."/>
            <person name="Dorman A."/>
            <person name="Fang F."/>
            <person name="Fu Y."/>
            <person name="Hu P."/>
            <person name="Hua A."/>
            <person name="Kenton S."/>
            <person name="Lai H."/>
            <person name="Lao H.I."/>
            <person name="Lewis J."/>
            <person name="Lewis S."/>
            <person name="Lin S.-P."/>
            <person name="Loh P."/>
            <person name="Malaj E."/>
            <person name="Nguyen T."/>
            <person name="Pan H."/>
            <person name="Phan S."/>
            <person name="Qi S."/>
            <person name="Qian Y."/>
            <person name="Ray L."/>
            <person name="Ren Q."/>
            <person name="Shaull S."/>
            <person name="Sloan D."/>
            <person name="Song L."/>
            <person name="Wang Q."/>
            <person name="Wang Y."/>
            <person name="Wang Z."/>
            <person name="White J."/>
            <person name="Willingham D."/>
            <person name="Wu H."/>
            <person name="Yao Z."/>
            <person name="Zhan M."/>
            <person name="Zhang G."/>
            <person name="Chissoe S."/>
            <person name="Murray J."/>
            <person name="Miller N."/>
            <person name="Minx P."/>
            <person name="Fulton R."/>
            <person name="Johnson D."/>
            <person name="Bemis G."/>
            <person name="Bentley D."/>
            <person name="Bradshaw H."/>
            <person name="Bourne S."/>
            <person name="Cordes M."/>
            <person name="Du Z."/>
            <person name="Fulton L."/>
            <person name="Goela D."/>
            <person name="Graves T."/>
            <person name="Hawkins J."/>
            <person name="Hinds K."/>
            <person name="Kemp K."/>
            <person name="Latreille P."/>
            <person name="Layman D."/>
            <person name="Ozersky P."/>
            <person name="Rohlfing T."/>
            <person name="Scheet P."/>
            <person name="Walker C."/>
            <person name="Wamsley A."/>
            <person name="Wohldmann P."/>
            <person name="Pepin K."/>
            <person name="Nelson J."/>
            <person name="Korf I."/>
            <person name="Bedell J.A."/>
            <person name="Hillier L.W."/>
            <person name="Mardis E."/>
            <person name="Waterston R."/>
            <person name="Wilson R."/>
            <person name="Emanuel B.S."/>
            <person name="Shaikh T."/>
            <person name="Kurahashi H."/>
            <person name="Saitta S."/>
            <person name="Budarf M.L."/>
            <person name="McDermid H.E."/>
            <person name="Johnson A."/>
            <person name="Wong A.C.C."/>
            <person name="Morrow B.E."/>
            <person name="Edelmann L."/>
            <person name="Kim U.J."/>
            <person name="Shizuya H."/>
            <person name="Simon M.I."/>
            <person name="Dumanski J.P."/>
            <person name="Peyrard M."/>
            <person name="Kedra D."/>
            <person name="Seroussi E."/>
            <person name="Fransson I."/>
            <person name="Tapia I."/>
            <person name="Bruder C.E."/>
            <person name="O'Brien K.P."/>
            <person name="Wilkinson P."/>
            <person name="Bodenteich A."/>
            <person name="Hartman K."/>
            <person name="Hu X."/>
            <person name="Khan A.S."/>
            <person name="Lane L."/>
            <person name="Tilahun Y."/>
            <person name="Wright H."/>
        </authorList>
    </citation>
    <scope>NUCLEOTIDE SEQUENCE [LARGE SCALE GENOMIC DNA]</scope>
</reference>
<reference key="5">
    <citation type="journal article" date="2004" name="Genome Res.">
        <title>The status, quality, and expansion of the NIH full-length cDNA project: the Mammalian Gene Collection (MGC).</title>
        <authorList>
            <consortium name="The MGC Project Team"/>
        </authorList>
    </citation>
    <scope>NUCLEOTIDE SEQUENCE [LARGE SCALE MRNA]</scope>
    <source>
        <tissue>Brain</tissue>
    </source>
</reference>
<reference key="6">
    <citation type="journal article" date="1992" name="Biochem. J.">
        <title>Characterization of a human class-theta glutathione S-transferase with activity towards 1-menaphthyl sulphate.</title>
        <authorList>
            <person name="Hussey A.J."/>
            <person name="Hayes J.D."/>
        </authorList>
    </citation>
    <scope>PROTEIN SEQUENCE OF 2-21</scope>
    <scope>FUNCTION</scope>
    <scope>CATALYTIC ACTIVITY</scope>
    <scope>SUBCELLULAR LOCATION</scope>
    <source>
        <tissue>Liver</tissue>
    </source>
</reference>
<reference key="7">
    <citation type="journal article" date="1996" name="Biochem. J.">
        <title>The distribution of theta-class glutathione S-transferases in the liver and lung of mouse, rat and human.</title>
        <authorList>
            <person name="Mainwaring G.W."/>
            <person name="Williams S.M."/>
            <person name="Foster J.R."/>
            <person name="Tugwood J."/>
            <person name="Green T."/>
        </authorList>
    </citation>
    <scope>TISSUE SPECIFICITY</scope>
    <source>
        <tissue>Liver</tissue>
        <tissue>Lung</tissue>
    </source>
</reference>
<reference key="8">
    <citation type="journal article" date="1998" name="Structure">
        <title>Human theta class glutathione transferase: the crystal structure reveals a sulfate-binding pocket within a buried active site.</title>
        <authorList>
            <person name="Rossjohn J."/>
            <person name="McKinstry W.J."/>
            <person name="Oakley A.J."/>
            <person name="Verger D."/>
            <person name="Flanagan J."/>
            <person name="Chelvanayagam G."/>
            <person name="Tan K.-L."/>
            <person name="Board P.G."/>
            <person name="Parker M.W."/>
        </authorList>
    </citation>
    <scope>X-RAY CRYSTALLOGRAPHY (3.2 ANGSTROMS) IN COMPLEX WITH GLUTATHIONE</scope>
    <scope>SUBUNIT</scope>
</reference>
<protein>
    <recommendedName>
        <fullName>Glutathione S-transferase theta-2B</fullName>
        <ecNumber evidence="1">2.5.1.18</ecNumber>
    </recommendedName>
    <alternativeName>
        <fullName evidence="5">Glutathione S-transferase theta-2</fullName>
        <shortName evidence="5">GST class-theta-2</shortName>
    </alternativeName>
</protein>
<sequence length="244" mass="27507">MGLELFLDLVSQPSRAVYIFAKKNGIPLELRTVDLVKGQHKSKEFLQINSLGKLPTLKDGDFILTESSAILIYLSCKYQTPDHWYPSDLQARARVHEYLGWHADCIRGTFGIPLWVQVLGPLIGVQVPEEKVERNRTAMDQALQWLEDKFLGDRPFLAGQQVTLADLMALEELMQPVALGYELFEGRPRLAAWRGRVEAFLGAELCQEAHSIILSILEQAAKKTLPTPSPEAYQAMLLRIARIP</sequence>
<feature type="initiator methionine" description="Removed" evidence="1">
    <location>
        <position position="1"/>
    </location>
</feature>
<feature type="chain" id="PRO_0000395344" description="Glutathione S-transferase theta-2B">
    <location>
        <begin position="2"/>
        <end position="244"/>
    </location>
</feature>
<feature type="domain" description="GST N-terminal">
    <location>
        <begin position="2"/>
        <end position="82"/>
    </location>
</feature>
<feature type="domain" description="GST C-terminal">
    <location>
        <begin position="88"/>
        <end position="224"/>
    </location>
</feature>
<feature type="binding site" evidence="3">
    <location>
        <begin position="40"/>
        <end position="41"/>
    </location>
    <ligand>
        <name>glutathione</name>
        <dbReference type="ChEBI" id="CHEBI:57925"/>
    </ligand>
</feature>
<feature type="binding site" evidence="3 7">
    <location>
        <begin position="53"/>
        <end position="54"/>
    </location>
    <ligand>
        <name>glutathione</name>
        <dbReference type="ChEBI" id="CHEBI:57925"/>
    </ligand>
</feature>
<feature type="binding site" evidence="3 7">
    <location>
        <begin position="66"/>
        <end position="67"/>
    </location>
    <ligand>
        <name>glutathione</name>
        <dbReference type="ChEBI" id="CHEBI:57925"/>
    </ligand>
</feature>
<feature type="binding site" evidence="3 7">
    <location>
        <begin position="104"/>
        <end position="107"/>
    </location>
    <ligand>
        <name>glutathione</name>
        <dbReference type="ChEBI" id="CHEBI:57925"/>
    </ligand>
</feature>
<feature type="sequence variant" id="VAR_033982" description="In dbSNP:rs1622002." evidence="4">
    <original>M</original>
    <variation>I</variation>
    <location>
        <position position="139"/>
    </location>
</feature>
<feature type="sequence conflict" description="In Ref. 6; AA sequence." evidence="6" ref="6">
    <original>G</original>
    <variation>V</variation>
    <location>
        <position position="2"/>
    </location>
</feature>
<feature type="sequence conflict" description="In Ref. 2; AAC13317." evidence="6" ref="2">
    <original>FLA</original>
    <variation>P</variation>
    <location>
        <begin position="156"/>
        <end position="158"/>
    </location>
</feature>
<feature type="strand" evidence="8">
    <location>
        <begin position="3"/>
        <end position="7"/>
    </location>
</feature>
<feature type="helix" evidence="8">
    <location>
        <begin position="12"/>
        <end position="23"/>
    </location>
</feature>
<feature type="strand" evidence="8">
    <location>
        <begin position="28"/>
        <end position="32"/>
    </location>
</feature>
<feature type="turn" evidence="8">
    <location>
        <begin position="35"/>
        <end position="38"/>
    </location>
</feature>
<feature type="helix" evidence="8">
    <location>
        <begin position="39"/>
        <end position="41"/>
    </location>
</feature>
<feature type="helix" evidence="8">
    <location>
        <begin position="43"/>
        <end position="46"/>
    </location>
</feature>
<feature type="strand" evidence="8">
    <location>
        <begin position="56"/>
        <end position="59"/>
    </location>
</feature>
<feature type="strand" evidence="8">
    <location>
        <begin position="62"/>
        <end position="65"/>
    </location>
</feature>
<feature type="helix" evidence="8">
    <location>
        <begin position="67"/>
        <end position="77"/>
    </location>
</feature>
<feature type="helix" evidence="8">
    <location>
        <begin position="82"/>
        <end position="84"/>
    </location>
</feature>
<feature type="helix" evidence="8">
    <location>
        <begin position="89"/>
        <end position="105"/>
    </location>
</feature>
<feature type="turn" evidence="8">
    <location>
        <begin position="106"/>
        <end position="111"/>
    </location>
</feature>
<feature type="helix" evidence="8">
    <location>
        <begin position="112"/>
        <end position="117"/>
    </location>
</feature>
<feature type="helix" evidence="8">
    <location>
        <begin position="119"/>
        <end position="122"/>
    </location>
</feature>
<feature type="helix" evidence="8">
    <location>
        <begin position="129"/>
        <end position="148"/>
    </location>
</feature>
<feature type="turn" evidence="8">
    <location>
        <begin position="149"/>
        <end position="153"/>
    </location>
</feature>
<feature type="strand" evidence="8">
    <location>
        <begin position="154"/>
        <end position="156"/>
    </location>
</feature>
<feature type="strand" evidence="8">
    <location>
        <begin position="159"/>
        <end position="161"/>
    </location>
</feature>
<feature type="helix" evidence="8">
    <location>
        <begin position="164"/>
        <end position="178"/>
    </location>
</feature>
<feature type="turn" evidence="8">
    <location>
        <begin position="183"/>
        <end position="186"/>
    </location>
</feature>
<feature type="helix" evidence="8">
    <location>
        <begin position="188"/>
        <end position="201"/>
    </location>
</feature>
<feature type="helix" evidence="8">
    <location>
        <begin position="203"/>
        <end position="222"/>
    </location>
</feature>
<feature type="helix" evidence="8">
    <location>
        <begin position="230"/>
        <end position="241"/>
    </location>
</feature>
<dbReference type="EC" id="2.5.1.18" evidence="1"/>
<dbReference type="EMBL" id="L38503">
    <property type="protein sequence ID" value="AAB63956.1"/>
    <property type="molecule type" value="mRNA"/>
</dbReference>
<dbReference type="EMBL" id="AF057176">
    <property type="protein sequence ID" value="AAC13317.1"/>
    <property type="molecule type" value="Genomic_DNA"/>
</dbReference>
<dbReference type="EMBL" id="AF057173">
    <property type="protein sequence ID" value="AAC13317.1"/>
    <property type="status" value="JOINED"/>
    <property type="molecule type" value="Genomic_DNA"/>
</dbReference>
<dbReference type="EMBL" id="AF057174">
    <property type="protein sequence ID" value="AAC13317.1"/>
    <property type="status" value="JOINED"/>
    <property type="molecule type" value="Genomic_DNA"/>
</dbReference>
<dbReference type="EMBL" id="AF057175">
    <property type="protein sequence ID" value="AAC13317.1"/>
    <property type="status" value="JOINED"/>
    <property type="molecule type" value="Genomic_DNA"/>
</dbReference>
<dbReference type="EMBL" id="CR456500">
    <property type="protein sequence ID" value="CAG30386.1"/>
    <property type="molecule type" value="mRNA"/>
</dbReference>
<dbReference type="EMBL" id="AP000350">
    <property type="status" value="NOT_ANNOTATED_CDS"/>
    <property type="molecule type" value="Genomic_DNA"/>
</dbReference>
<dbReference type="EMBL" id="BC002415">
    <property type="protein sequence ID" value="AAH02415.1"/>
    <property type="molecule type" value="mRNA"/>
</dbReference>
<dbReference type="CCDS" id="CCDS33617.1"/>
<dbReference type="PIR" id="A56847">
    <property type="entry name" value="A56847"/>
</dbReference>
<dbReference type="RefSeq" id="NP_001074312.1">
    <property type="nucleotide sequence ID" value="NM_001080843.4"/>
</dbReference>
<dbReference type="PDB" id="1LJR">
    <property type="method" value="X-ray"/>
    <property type="resolution" value="3.20 A"/>
    <property type="chains" value="A/B=1-244"/>
</dbReference>
<dbReference type="PDB" id="2LJR">
    <property type="method" value="X-ray"/>
    <property type="resolution" value="3.20 A"/>
    <property type="chains" value="A/B=1-244"/>
</dbReference>
<dbReference type="PDB" id="3LJR">
    <property type="method" value="X-ray"/>
    <property type="resolution" value="3.30 A"/>
    <property type="chains" value="A/B=1-244"/>
</dbReference>
<dbReference type="PDB" id="4MPG">
    <property type="method" value="X-ray"/>
    <property type="resolution" value="1.95 A"/>
    <property type="chains" value="A/B=1-244"/>
</dbReference>
<dbReference type="PDBsum" id="1LJR"/>
<dbReference type="PDBsum" id="2LJR"/>
<dbReference type="PDBsum" id="3LJR"/>
<dbReference type="PDBsum" id="4MPG"/>
<dbReference type="SMR" id="P0CG30"/>
<dbReference type="BioGRID" id="109208">
    <property type="interactions" value="4"/>
</dbReference>
<dbReference type="BioGRID" id="575985">
    <property type="interactions" value="14"/>
</dbReference>
<dbReference type="FunCoup" id="P0CG30">
    <property type="interactions" value="207"/>
</dbReference>
<dbReference type="IntAct" id="P0CG30">
    <property type="interactions" value="5"/>
</dbReference>
<dbReference type="MINT" id="P0CG30"/>
<dbReference type="STRING" id="9606.ENSP00000290765"/>
<dbReference type="DrugBank" id="DB00321">
    <property type="generic name" value="Amitriptyline"/>
</dbReference>
<dbReference type="DrugBank" id="DB00291">
    <property type="generic name" value="Chlorambucil"/>
</dbReference>
<dbReference type="DrugBank" id="DB03619">
    <property type="generic name" value="Deoxycholic acid"/>
</dbReference>
<dbReference type="DrugBank" id="DB03310">
    <property type="generic name" value="Glutathione disulfide"/>
</dbReference>
<dbReference type="GlyGen" id="P0CG30">
    <property type="glycosylation" value="2 sites, 1 O-linked glycan (1 site)"/>
</dbReference>
<dbReference type="iPTMnet" id="P0CG30"/>
<dbReference type="PhosphoSitePlus" id="P0CG30"/>
<dbReference type="BioMuta" id="GSTT2B"/>
<dbReference type="jPOST" id="P0CG30"/>
<dbReference type="MassIVE" id="P0CG30"/>
<dbReference type="PaxDb" id="9606-ENSP00000290765"/>
<dbReference type="PeptideAtlas" id="P0CG30"/>
<dbReference type="Pumba" id="P0CG30"/>
<dbReference type="Antibodypedia" id="23874">
    <property type="antibodies" value="107 antibodies from 20 providers"/>
</dbReference>
<dbReference type="DNASU" id="2953"/>
<dbReference type="Ensembl" id="ENST00000290765.9">
    <property type="protein sequence ID" value="ENSP00000290765.4"/>
    <property type="gene ID" value="ENSG00000133433.11"/>
</dbReference>
<dbReference type="Ensembl" id="ENST00000616938.1">
    <property type="protein sequence ID" value="ENSP00000478389.1"/>
    <property type="gene ID" value="ENSG00000278695.1"/>
</dbReference>
<dbReference type="GeneID" id="653689"/>
<dbReference type="KEGG" id="hsa:653689"/>
<dbReference type="MANE-Select" id="ENST00000290765.9">
    <property type="protein sequence ID" value="ENSP00000290765.4"/>
    <property type="RefSeq nucleotide sequence ID" value="NM_001080843.4"/>
    <property type="RefSeq protein sequence ID" value="NP_001074312.1"/>
</dbReference>
<dbReference type="UCSC" id="uc002zyw.5">
    <property type="organism name" value="human"/>
</dbReference>
<dbReference type="AGR" id="HGNC:33437"/>
<dbReference type="CTD" id="653689"/>
<dbReference type="DisGeNET" id="653689"/>
<dbReference type="GeneCards" id="GSTT2B"/>
<dbReference type="HGNC" id="HGNC:33437">
    <property type="gene designation" value="GSTT2B"/>
</dbReference>
<dbReference type="HPA" id="ENSG00000133433">
    <property type="expression patterns" value="Group enriched (adrenal gland, breast)"/>
</dbReference>
<dbReference type="neXtProt" id="NX_P0CG30"/>
<dbReference type="OpenTargets" id="ENSG00000133433"/>
<dbReference type="PharmGKB" id="PA162390358"/>
<dbReference type="VEuPathDB" id="HostDB:ENSG00000133433"/>
<dbReference type="eggNOG" id="KOG0867">
    <property type="taxonomic scope" value="Eukaryota"/>
</dbReference>
<dbReference type="GeneTree" id="ENSGT00940000162786"/>
<dbReference type="HOGENOM" id="CLU_011226_2_0_1"/>
<dbReference type="InParanoid" id="P0CG30"/>
<dbReference type="OMA" id="YFRTIWL"/>
<dbReference type="OrthoDB" id="422574at2759"/>
<dbReference type="PAN-GO" id="P0CG30">
    <property type="GO annotations" value="3 GO annotations based on evolutionary models"/>
</dbReference>
<dbReference type="PhylomeDB" id="P0CG30"/>
<dbReference type="TreeFam" id="TF325759"/>
<dbReference type="BRENDA" id="2.5.1.18">
    <property type="organism ID" value="2681"/>
</dbReference>
<dbReference type="PathwayCommons" id="P0CG30"/>
<dbReference type="Reactome" id="R-HSA-156590">
    <property type="pathway name" value="Glutathione conjugation"/>
</dbReference>
<dbReference type="SignaLink" id="P0CG30"/>
<dbReference type="BioGRID-ORCS" id="653689">
    <property type="hits" value="295 hits in 1048 CRISPR screens"/>
</dbReference>
<dbReference type="EvolutionaryTrace" id="P0CG30"/>
<dbReference type="GeneWiki" id="GSTT2"/>
<dbReference type="GenomeRNAi" id="653689"/>
<dbReference type="Pharos" id="P0CG30">
    <property type="development level" value="Tbio"/>
</dbReference>
<dbReference type="PRO" id="PR:P0CG30"/>
<dbReference type="Proteomes" id="UP000005640">
    <property type="component" value="Chromosome 22"/>
</dbReference>
<dbReference type="RNAct" id="P0CG30">
    <property type="molecule type" value="protein"/>
</dbReference>
<dbReference type="Bgee" id="ENSG00000133433">
    <property type="expression patterns" value="Expressed in lower esophagus mucosa and 93 other cell types or tissues"/>
</dbReference>
<dbReference type="ExpressionAtlas" id="P0CG30">
    <property type="expression patterns" value="baseline and differential"/>
</dbReference>
<dbReference type="GO" id="GO:0005737">
    <property type="term" value="C:cytoplasm"/>
    <property type="evidence" value="ECO:0000318"/>
    <property type="project" value="GO_Central"/>
</dbReference>
<dbReference type="GO" id="GO:0005829">
    <property type="term" value="C:cytosol"/>
    <property type="evidence" value="ECO:0000314"/>
    <property type="project" value="UniProtKB"/>
</dbReference>
<dbReference type="GO" id="GO:0070062">
    <property type="term" value="C:extracellular exosome"/>
    <property type="evidence" value="ECO:0007005"/>
    <property type="project" value="UniProtKB"/>
</dbReference>
<dbReference type="GO" id="GO:0004364">
    <property type="term" value="F:glutathione transferase activity"/>
    <property type="evidence" value="ECO:0000314"/>
    <property type="project" value="UniProtKB"/>
</dbReference>
<dbReference type="GO" id="GO:0006749">
    <property type="term" value="P:glutathione metabolic process"/>
    <property type="evidence" value="ECO:0000318"/>
    <property type="project" value="GO_Central"/>
</dbReference>
<dbReference type="CDD" id="cd03183">
    <property type="entry name" value="GST_C_Theta"/>
    <property type="match status" value="1"/>
</dbReference>
<dbReference type="CDD" id="cd03050">
    <property type="entry name" value="GST_N_Theta"/>
    <property type="match status" value="1"/>
</dbReference>
<dbReference type="FunFam" id="3.40.30.10:FF:000086">
    <property type="entry name" value="Glutathione S-transferase theta-1"/>
    <property type="match status" value="1"/>
</dbReference>
<dbReference type="FunFam" id="1.20.1050.10:FF:000200">
    <property type="entry name" value="Glutathione S-transferase theta-2B"/>
    <property type="match status" value="1"/>
</dbReference>
<dbReference type="Gene3D" id="1.20.1050.10">
    <property type="match status" value="1"/>
</dbReference>
<dbReference type="Gene3D" id="3.40.30.10">
    <property type="entry name" value="Glutaredoxin"/>
    <property type="match status" value="1"/>
</dbReference>
<dbReference type="InterPro" id="IPR010987">
    <property type="entry name" value="Glutathione-S-Trfase_C-like"/>
</dbReference>
<dbReference type="InterPro" id="IPR036282">
    <property type="entry name" value="Glutathione-S-Trfase_C_sf"/>
</dbReference>
<dbReference type="InterPro" id="IPR004045">
    <property type="entry name" value="Glutathione_S-Trfase_N"/>
</dbReference>
<dbReference type="InterPro" id="IPR004046">
    <property type="entry name" value="GST_C"/>
</dbReference>
<dbReference type="InterPro" id="IPR040077">
    <property type="entry name" value="GST_C_Theta"/>
</dbReference>
<dbReference type="InterPro" id="IPR040075">
    <property type="entry name" value="GST_N_Theta"/>
</dbReference>
<dbReference type="InterPro" id="IPR051369">
    <property type="entry name" value="GST_Theta"/>
</dbReference>
<dbReference type="InterPro" id="IPR036249">
    <property type="entry name" value="Thioredoxin-like_sf"/>
</dbReference>
<dbReference type="PANTHER" id="PTHR43917">
    <property type="match status" value="1"/>
</dbReference>
<dbReference type="PANTHER" id="PTHR43917:SF4">
    <property type="entry name" value="GLUTATHIONE S-TRANSFERASE THETA-2-RELATED"/>
    <property type="match status" value="1"/>
</dbReference>
<dbReference type="Pfam" id="PF00043">
    <property type="entry name" value="GST_C"/>
    <property type="match status" value="1"/>
</dbReference>
<dbReference type="Pfam" id="PF02798">
    <property type="entry name" value="GST_N"/>
    <property type="match status" value="1"/>
</dbReference>
<dbReference type="SFLD" id="SFLDG01153">
    <property type="entry name" value="Main.4:_Theta-like"/>
    <property type="match status" value="1"/>
</dbReference>
<dbReference type="SFLD" id="SFLDG00358">
    <property type="entry name" value="Main_(cytGST)"/>
    <property type="match status" value="1"/>
</dbReference>
<dbReference type="SUPFAM" id="SSF47616">
    <property type="entry name" value="GST C-terminal domain-like"/>
    <property type="match status" value="1"/>
</dbReference>
<dbReference type="SUPFAM" id="SSF52833">
    <property type="entry name" value="Thioredoxin-like"/>
    <property type="match status" value="1"/>
</dbReference>
<dbReference type="PROSITE" id="PS50405">
    <property type="entry name" value="GST_CTER"/>
    <property type="match status" value="1"/>
</dbReference>
<dbReference type="PROSITE" id="PS50404">
    <property type="entry name" value="GST_NTER"/>
    <property type="match status" value="1"/>
</dbReference>
<evidence type="ECO:0000269" key="1">
    <source>
    </source>
</evidence>
<evidence type="ECO:0000269" key="2">
    <source>
    </source>
</evidence>
<evidence type="ECO:0000269" key="3">
    <source>
    </source>
</evidence>
<evidence type="ECO:0000269" key="4">
    <source ref="2"/>
</evidence>
<evidence type="ECO:0000303" key="5">
    <source>
    </source>
</evidence>
<evidence type="ECO:0000305" key="6"/>
<evidence type="ECO:0007744" key="7">
    <source>
        <dbReference type="PDB" id="1LJR"/>
    </source>
</evidence>
<evidence type="ECO:0007829" key="8">
    <source>
        <dbReference type="PDB" id="4MPG"/>
    </source>
</evidence>
<name>GSTT2_HUMAN</name>
<comment type="function">
    <text evidence="1">Conjugation of reduced glutathione to a wide number of exogenous and endogenous hydrophobic electrophiles (PubMed:1417752). Has a sulfatase activity (PubMed:1417752).</text>
</comment>
<comment type="catalytic activity">
    <reaction evidence="1">
        <text>RX + glutathione = an S-substituted glutathione + a halide anion + H(+)</text>
        <dbReference type="Rhea" id="RHEA:16437"/>
        <dbReference type="ChEBI" id="CHEBI:15378"/>
        <dbReference type="ChEBI" id="CHEBI:16042"/>
        <dbReference type="ChEBI" id="CHEBI:17792"/>
        <dbReference type="ChEBI" id="CHEBI:57925"/>
        <dbReference type="ChEBI" id="CHEBI:90779"/>
        <dbReference type="EC" id="2.5.1.18"/>
    </reaction>
</comment>
<comment type="subunit">
    <text evidence="3">Homodimer.</text>
</comment>
<comment type="interaction">
    <interactant intactId="EBI-13572836">
        <id>P0CG30</id>
    </interactant>
    <interactant intactId="EBI-349854">
        <id>P13569</id>
        <label>CFTR</label>
    </interactant>
    <organismsDiffer>false</organismsDiffer>
    <experiments>4</experiments>
</comment>
<comment type="subcellular location">
    <subcellularLocation>
        <location evidence="1">Cytoplasm</location>
        <location evidence="1">Cytosol</location>
    </subcellularLocation>
</comment>
<comment type="tissue specificity">
    <text evidence="2">Expressed at low levels in liver. In lung, expressed at low levels in ciliated bronchiolar cells, alveolar macrophages and alveolar type II cells.</text>
</comment>
<comment type="similarity">
    <text evidence="6">Belongs to the GST superfamily. Theta family.</text>
</comment>
<proteinExistence type="evidence at protein level"/>
<accession>P0CG30</accession>
<accession>O60665</accession>
<accession>P30712</accession>
<accession>Q6IPV7</accession>
<accession>Q9HD76</accession>
<organism>
    <name type="scientific">Homo sapiens</name>
    <name type="common">Human</name>
    <dbReference type="NCBI Taxonomy" id="9606"/>
    <lineage>
        <taxon>Eukaryota</taxon>
        <taxon>Metazoa</taxon>
        <taxon>Chordata</taxon>
        <taxon>Craniata</taxon>
        <taxon>Vertebrata</taxon>
        <taxon>Euteleostomi</taxon>
        <taxon>Mammalia</taxon>
        <taxon>Eutheria</taxon>
        <taxon>Euarchontoglires</taxon>
        <taxon>Primates</taxon>
        <taxon>Haplorrhini</taxon>
        <taxon>Catarrhini</taxon>
        <taxon>Hominidae</taxon>
        <taxon>Homo</taxon>
    </lineage>
</organism>
<gene>
    <name type="primary">GSTT2B</name>
    <name evidence="5" type="synonym">GSTT2</name>
</gene>
<keyword id="KW-0002">3D-structure</keyword>
<keyword id="KW-0963">Cytoplasm</keyword>
<keyword id="KW-0903">Direct protein sequencing</keyword>
<keyword id="KW-1185">Reference proteome</keyword>
<keyword id="KW-0808">Transferase</keyword>